<protein>
    <recommendedName>
        <fullName evidence="1">Structure-specific endonuclease subunit SLX1</fullName>
        <ecNumber evidence="1">3.1.-.-</ecNumber>
    </recommendedName>
    <alternativeName>
        <fullName evidence="1">GIY-YIG domain-containing protein 1</fullName>
    </alternativeName>
</protein>
<sequence>MGPAGVAARPGRFFGVYLLYCLNPRYRGRVYVGFTVNTARRVQQHNGGRKKGGAWRTSGRGPWEMVLVVHGFPSSVAALRFEWAWQHPHASRRLAHVGPRLRGETAFAFHLRVLAHMLRAPPWARLPLTLRWVRPDLRQDLCLPPPPHVPLAFGPPPPQAPAPRRRAGPFDDAEPEPDQGDPGACCSLCAQTIQDEEGPLCCPHPGCLLRAHVICLAEEFLQEEPGQLLPLEGQCPCCEKSLLWGDLIWLCQMDTEKEVEDSELEEAHWTDLLET</sequence>
<gene>
    <name evidence="1" type="primary">SLX1A</name>
    <name evidence="1" type="synonym">GIYD1</name>
    <name type="synonym">SLX1</name>
</gene>
<gene>
    <name evidence="1" type="primary">SLX1B</name>
    <name type="synonym">GIYD2</name>
    <name type="synonym">SLX1</name>
</gene>
<comment type="function">
    <text evidence="1 3 4 5">Catalytic subunit of the SLX1-SLX4 structure-specific endonuclease that resolves DNA secondary structures generated during DNA repair and recombination. Has endonuclease activity towards branched DNA substrates, introducing single-strand cuts in duplex DNA close to junctions with ss-DNA. Has a preference for 5'-flap structures, and promotes symmetrical cleavage of static and migrating Holliday junctions (HJs). Resolves HJs by generating two pairs of ligatable, nicked duplex products.</text>
</comment>
<comment type="cofactor">
    <cofactor>
        <name>a divalent metal cation</name>
        <dbReference type="ChEBI" id="CHEBI:60240"/>
    </cofactor>
</comment>
<comment type="subunit">
    <text>Forms a heterodimer with SLX4.</text>
</comment>
<comment type="interaction">
    <interactant intactId="EBI-2370858">
        <id>Q9BQ83</id>
    </interactant>
    <interactant intactId="EBI-2370740">
        <id>Q8IY92</id>
        <label>SLX4</label>
    </interactant>
    <organismsDiffer>false</organismsDiffer>
    <experiments>10</experiments>
</comment>
<comment type="subcellular location">
    <subcellularLocation>
        <location evidence="1 5">Nucleus</location>
    </subcellularLocation>
</comment>
<comment type="alternative products">
    <event type="alternative splicing"/>
    <isoform>
        <id>Q9BQ83-1</id>
        <name>1</name>
        <sequence type="displayed"/>
    </isoform>
    <isoform>
        <id>Q9BQ83-2</id>
        <name>2</name>
        <sequence type="described" ref="VSP_033331"/>
    </isoform>
</comment>
<comment type="similarity">
    <text evidence="1">Belongs to the SLX1 family.</text>
</comment>
<comment type="caution">
    <text evidence="7">Found in a segmental duplication on p arm of chromosome 16 giving rise to two identical copies of this gene sharing exons with SULT1A3 and SULT1A4.</text>
</comment>
<keyword id="KW-0025">Alternative splicing</keyword>
<keyword id="KW-0227">DNA damage</keyword>
<keyword id="KW-0233">DNA recombination</keyword>
<keyword id="KW-0234">DNA repair</keyword>
<keyword id="KW-0255">Endonuclease</keyword>
<keyword id="KW-0378">Hydrolase</keyword>
<keyword id="KW-0479">Metal-binding</keyword>
<keyword id="KW-0540">Nuclease</keyword>
<keyword id="KW-0539">Nucleus</keyword>
<keyword id="KW-1267">Proteomics identification</keyword>
<keyword id="KW-1185">Reference proteome</keyword>
<keyword id="KW-0862">Zinc</keyword>
<keyword id="KW-0863">Zinc-finger</keyword>
<feature type="chain" id="PRO_0000332120" description="Structure-specific endonuclease subunit SLX1">
    <location>
        <begin position="1"/>
        <end position="275"/>
    </location>
</feature>
<feature type="domain" description="GIY-YIG" evidence="1">
    <location>
        <begin position="12"/>
        <end position="95"/>
    </location>
</feature>
<feature type="zinc finger region" description="SLX1-type" evidence="1">
    <location>
        <begin position="186"/>
        <end position="238"/>
    </location>
</feature>
<feature type="region of interest" description="Disordered" evidence="2">
    <location>
        <begin position="148"/>
        <end position="179"/>
    </location>
</feature>
<feature type="compositionally biased region" description="Pro residues" evidence="2">
    <location>
        <begin position="148"/>
        <end position="161"/>
    </location>
</feature>
<feature type="splice variant" id="VSP_033331" description="In isoform 2." evidence="6">
    <location>
        <begin position="81"/>
        <end position="194"/>
    </location>
</feature>
<feature type="mutagenesis site" description="Abolishes endonucleolytic activity." evidence="5">
    <original>R</original>
    <variation>A</variation>
    <location>
        <position position="41"/>
    </location>
</feature>
<feature type="mutagenesis site" description="Abolishes endonucleolytic activity." evidence="4 5">
    <original>E</original>
    <variation>A</variation>
    <location>
        <position position="82"/>
    </location>
</feature>
<proteinExistence type="evidence at protein level"/>
<accession>Q9BQ83</accession>
<accession>B7ZME1</accession>
<accession>Q6NTG6</accession>
<name>SLX1_HUMAN</name>
<evidence type="ECO:0000255" key="1">
    <source>
        <dbReference type="HAMAP-Rule" id="MF_03100"/>
    </source>
</evidence>
<evidence type="ECO:0000256" key="2">
    <source>
        <dbReference type="SAM" id="MobiDB-lite"/>
    </source>
</evidence>
<evidence type="ECO:0000269" key="3">
    <source>
    </source>
</evidence>
<evidence type="ECO:0000269" key="4">
    <source>
    </source>
</evidence>
<evidence type="ECO:0000269" key="5">
    <source>
    </source>
</evidence>
<evidence type="ECO:0000303" key="6">
    <source>
    </source>
</evidence>
<evidence type="ECO:0000305" key="7"/>
<organism>
    <name type="scientific">Homo sapiens</name>
    <name type="common">Human</name>
    <dbReference type="NCBI Taxonomy" id="9606"/>
    <lineage>
        <taxon>Eukaryota</taxon>
        <taxon>Metazoa</taxon>
        <taxon>Chordata</taxon>
        <taxon>Craniata</taxon>
        <taxon>Vertebrata</taxon>
        <taxon>Euteleostomi</taxon>
        <taxon>Mammalia</taxon>
        <taxon>Eutheria</taxon>
        <taxon>Euarchontoglires</taxon>
        <taxon>Primates</taxon>
        <taxon>Haplorrhini</taxon>
        <taxon>Catarrhini</taxon>
        <taxon>Hominidae</taxon>
        <taxon>Homo</taxon>
    </lineage>
</organism>
<reference key="1">
    <citation type="journal article" date="2004" name="Nature">
        <title>The sequence and analysis of duplication-rich human chromosome 16.</title>
        <authorList>
            <person name="Martin J."/>
            <person name="Han C."/>
            <person name="Gordon L.A."/>
            <person name="Terry A."/>
            <person name="Prabhakar S."/>
            <person name="She X."/>
            <person name="Xie G."/>
            <person name="Hellsten U."/>
            <person name="Chan Y.M."/>
            <person name="Altherr M."/>
            <person name="Couronne O."/>
            <person name="Aerts A."/>
            <person name="Bajorek E."/>
            <person name="Black S."/>
            <person name="Blumer H."/>
            <person name="Branscomb E."/>
            <person name="Brown N.C."/>
            <person name="Bruno W.J."/>
            <person name="Buckingham J.M."/>
            <person name="Callen D.F."/>
            <person name="Campbell C.S."/>
            <person name="Campbell M.L."/>
            <person name="Campbell E.W."/>
            <person name="Caoile C."/>
            <person name="Challacombe J.F."/>
            <person name="Chasteen L.A."/>
            <person name="Chertkov O."/>
            <person name="Chi H.C."/>
            <person name="Christensen M."/>
            <person name="Clark L.M."/>
            <person name="Cohn J.D."/>
            <person name="Denys M."/>
            <person name="Detter J.C."/>
            <person name="Dickson M."/>
            <person name="Dimitrijevic-Bussod M."/>
            <person name="Escobar J."/>
            <person name="Fawcett J.J."/>
            <person name="Flowers D."/>
            <person name="Fotopulos D."/>
            <person name="Glavina T."/>
            <person name="Gomez M."/>
            <person name="Gonzales E."/>
            <person name="Goodstein D."/>
            <person name="Goodwin L.A."/>
            <person name="Grady D.L."/>
            <person name="Grigoriev I."/>
            <person name="Groza M."/>
            <person name="Hammon N."/>
            <person name="Hawkins T."/>
            <person name="Haydu L."/>
            <person name="Hildebrand C.E."/>
            <person name="Huang W."/>
            <person name="Israni S."/>
            <person name="Jett J."/>
            <person name="Jewett P.B."/>
            <person name="Kadner K."/>
            <person name="Kimball H."/>
            <person name="Kobayashi A."/>
            <person name="Krawczyk M.-C."/>
            <person name="Leyba T."/>
            <person name="Longmire J.L."/>
            <person name="Lopez F."/>
            <person name="Lou Y."/>
            <person name="Lowry S."/>
            <person name="Ludeman T."/>
            <person name="Manohar C.F."/>
            <person name="Mark G.A."/>
            <person name="McMurray K.L."/>
            <person name="Meincke L.J."/>
            <person name="Morgan J."/>
            <person name="Moyzis R.K."/>
            <person name="Mundt M.O."/>
            <person name="Munk A.C."/>
            <person name="Nandkeshwar R.D."/>
            <person name="Pitluck S."/>
            <person name="Pollard M."/>
            <person name="Predki P."/>
            <person name="Parson-Quintana B."/>
            <person name="Ramirez L."/>
            <person name="Rash S."/>
            <person name="Retterer J."/>
            <person name="Ricke D.O."/>
            <person name="Robinson D.L."/>
            <person name="Rodriguez A."/>
            <person name="Salamov A."/>
            <person name="Saunders E.H."/>
            <person name="Scott D."/>
            <person name="Shough T."/>
            <person name="Stallings R.L."/>
            <person name="Stalvey M."/>
            <person name="Sutherland R.D."/>
            <person name="Tapia R."/>
            <person name="Tesmer J.G."/>
            <person name="Thayer N."/>
            <person name="Thompson L.S."/>
            <person name="Tice H."/>
            <person name="Torney D.C."/>
            <person name="Tran-Gyamfi M."/>
            <person name="Tsai M."/>
            <person name="Ulanovsky L.E."/>
            <person name="Ustaszewska A."/>
            <person name="Vo N."/>
            <person name="White P.S."/>
            <person name="Williams A.L."/>
            <person name="Wills P.L."/>
            <person name="Wu J.-R."/>
            <person name="Wu K."/>
            <person name="Yang J."/>
            <person name="DeJong P."/>
            <person name="Bruce D."/>
            <person name="Doggett N.A."/>
            <person name="Deaven L."/>
            <person name="Schmutz J."/>
            <person name="Grimwood J."/>
            <person name="Richardson P."/>
            <person name="Rokhsar D.S."/>
            <person name="Eichler E.E."/>
            <person name="Gilna P."/>
            <person name="Lucas S.M."/>
            <person name="Myers R.M."/>
            <person name="Rubin E.M."/>
            <person name="Pennacchio L.A."/>
        </authorList>
    </citation>
    <scope>NUCLEOTIDE SEQUENCE [LARGE SCALE GENOMIC DNA]</scope>
</reference>
<reference key="2">
    <citation type="journal article" date="2004" name="Genome Res.">
        <title>The status, quality, and expansion of the NIH full-length cDNA project: the Mammalian Gene Collection (MGC).</title>
        <authorList>
            <consortium name="The MGC Project Team"/>
        </authorList>
    </citation>
    <scope>NUCLEOTIDE SEQUENCE [LARGE SCALE MRNA] (ISOFORMS 1 AND 2)</scope>
    <source>
        <tissue>B-cell</tissue>
        <tissue>Lung</tissue>
        <tissue>Placenta</tissue>
    </source>
</reference>
<reference key="3">
    <citation type="journal article" date="2004" name="Biochem. Biophys. Res. Commun.">
        <title>Human SULT1A3 pharmacogenetics: gene duplication and functional genomic studies.</title>
        <authorList>
            <person name="Hildebrandt M.A.T."/>
            <person name="Salavaggione O.E."/>
            <person name="Martin Y.N."/>
            <person name="Flynn H.C."/>
            <person name="Jalal S."/>
            <person name="Wieben E.D."/>
            <person name="Weinshilboum R.M."/>
        </authorList>
    </citation>
    <scope>IDENTIFICATION</scope>
</reference>
<reference key="4">
    <citation type="journal article" date="2009" name="Cell">
        <title>Mammalian BTBD12/SLX4 assembles a Holliday junction resolvase and is required for DNA repair.</title>
        <authorList>
            <person name="Svendsen J.M."/>
            <person name="Smogorzewska A."/>
            <person name="Sowa M.E."/>
            <person name="O'Connell B.C."/>
            <person name="Gygi S.P."/>
            <person name="Elledge S.J."/>
            <person name="Harper J.W."/>
        </authorList>
    </citation>
    <scope>FUNCTION</scope>
    <scope>INTERACTION WITH SLX4</scope>
    <scope>MUTAGENESIS OF GLU-82</scope>
</reference>
<reference key="5">
    <citation type="journal article" date="2009" name="Cell">
        <title>Human SLX4 is a Holliday junction resolvase subunit that binds multiple DNA repair/recombination endonucleases.</title>
        <authorList>
            <person name="Fekairi S."/>
            <person name="Scaglione S."/>
            <person name="Chahwan C."/>
            <person name="Taylor E.R."/>
            <person name="Tissier A."/>
            <person name="Coulon S."/>
            <person name="Dong M.-Q."/>
            <person name="Ruse C."/>
            <person name="Yates J.R. III"/>
            <person name="Russell P."/>
            <person name="Fuchs R.P."/>
            <person name="McGowan C.H."/>
            <person name="Gaillard P.-H.L."/>
        </authorList>
    </citation>
    <scope>FUNCTION</scope>
    <scope>INTERACTION WITH SLX4</scope>
    <scope>MUTAGENESIS OF ARG-41 AND GLU-82</scope>
    <scope>SUBCELLULAR LOCATION</scope>
</reference>
<reference key="6">
    <citation type="journal article" date="2009" name="Mol. Cell">
        <title>Coordination of structure-specific nucleases by human SLX4/BTBD12 is required for DNA repair.</title>
        <authorList>
            <person name="Munoz I.M."/>
            <person name="Hain K."/>
            <person name="Declais A.-C."/>
            <person name="Gardiner M."/>
            <person name="Toh G.W."/>
            <person name="Sanchez-Pulido L."/>
            <person name="Heuckmann J.M."/>
            <person name="Toth R."/>
            <person name="Macartney T."/>
            <person name="Eppink B."/>
            <person name="Kanaar R."/>
            <person name="Ponting C.P."/>
            <person name="Lilley D.M.J."/>
            <person name="Rouse J."/>
        </authorList>
    </citation>
    <scope>FUNCTION</scope>
    <scope>INTERACTION WITH SLX4</scope>
</reference>
<dbReference type="EC" id="3.1.-.-" evidence="1"/>
<dbReference type="EMBL" id="AC106782">
    <property type="status" value="NOT_ANNOTATED_CDS"/>
    <property type="molecule type" value="Genomic_DNA"/>
</dbReference>
<dbReference type="EMBL" id="AC133555">
    <property type="status" value="NOT_ANNOTATED_CDS"/>
    <property type="molecule type" value="Genomic_DNA"/>
</dbReference>
<dbReference type="EMBL" id="BC000754">
    <property type="protein sequence ID" value="AAH00754.1"/>
    <property type="molecule type" value="mRNA"/>
</dbReference>
<dbReference type="EMBL" id="BC000803">
    <property type="protein sequence ID" value="AAH00803.1"/>
    <property type="molecule type" value="mRNA"/>
</dbReference>
<dbReference type="EMBL" id="BC015990">
    <property type="protein sequence ID" value="AAH15990.1"/>
    <property type="molecule type" value="mRNA"/>
</dbReference>
<dbReference type="EMBL" id="BC019306">
    <property type="protein sequence ID" value="AAH19306.1"/>
    <property type="molecule type" value="mRNA"/>
</dbReference>
<dbReference type="EMBL" id="BC069007">
    <property type="protein sequence ID" value="AAH69007.1"/>
    <property type="molecule type" value="mRNA"/>
</dbReference>
<dbReference type="EMBL" id="BC130545">
    <property type="protein sequence ID" value="AAI30546.1"/>
    <property type="molecule type" value="mRNA"/>
</dbReference>
<dbReference type="EMBL" id="BC130547">
    <property type="protein sequence ID" value="AAI30548.1"/>
    <property type="molecule type" value="mRNA"/>
</dbReference>
<dbReference type="EMBL" id="BC144462">
    <property type="protein sequence ID" value="AAI44463.1"/>
    <property type="molecule type" value="mRNA"/>
</dbReference>
<dbReference type="CCDS" id="CCDS10648.1">
    <molecule id="Q9BQ83-1"/>
</dbReference>
<dbReference type="CCDS" id="CCDS10649.1">
    <molecule id="Q9BQ83-2"/>
</dbReference>
<dbReference type="CCDS" id="CCDS32431.1">
    <molecule id="Q9BQ83-1"/>
</dbReference>
<dbReference type="CCDS" id="CCDS32432.1">
    <molecule id="Q9BQ83-2"/>
</dbReference>
<dbReference type="RefSeq" id="NP_001014999.1">
    <molecule id="Q9BQ83-1"/>
    <property type="nucleotide sequence ID" value="NM_001014999.3"/>
</dbReference>
<dbReference type="RefSeq" id="NP_001015000.1">
    <molecule id="Q9BQ83-2"/>
    <property type="nucleotide sequence ID" value="NM_001015000.2"/>
</dbReference>
<dbReference type="RefSeq" id="NP_076949.1">
    <molecule id="Q9BQ83-1"/>
    <property type="nucleotide sequence ID" value="NM_024044.3"/>
</dbReference>
<dbReference type="RefSeq" id="NP_835145.1">
    <molecule id="Q9BQ83-2"/>
    <property type="nucleotide sequence ID" value="NM_178044.2"/>
</dbReference>
<dbReference type="SMR" id="Q9BQ83"/>
<dbReference type="BioGRID" id="122479">
    <property type="interactions" value="47"/>
</dbReference>
<dbReference type="BioGRID" id="139225">
    <property type="interactions" value="32"/>
</dbReference>
<dbReference type="ComplexPortal" id="CPX-8175">
    <property type="entry name" value="SLX1-SLX4 structure-specific endonuclease complex"/>
</dbReference>
<dbReference type="FunCoup" id="Q9BQ83">
    <property type="interactions" value="263"/>
</dbReference>
<dbReference type="IntAct" id="Q9BQ83">
    <property type="interactions" value="74"/>
</dbReference>
<dbReference type="STRING" id="9606.ENSP00000251303"/>
<dbReference type="GlyGen" id="Q9BQ83">
    <property type="glycosylation" value="1 site, 1 O-linked glycan (1 site)"/>
</dbReference>
<dbReference type="iPTMnet" id="Q9BQ83"/>
<dbReference type="PhosphoSitePlus" id="Q9BQ83"/>
<dbReference type="BioMuta" id="SLX1A"/>
<dbReference type="DMDM" id="74732820"/>
<dbReference type="jPOST" id="Q9BQ83"/>
<dbReference type="MassIVE" id="Q9BQ83"/>
<dbReference type="PaxDb" id="9606-ENSP00000251303"/>
<dbReference type="PeptideAtlas" id="Q9BQ83"/>
<dbReference type="Antibodypedia" id="26716">
    <property type="antibodies" value="57 antibodies from 15 providers"/>
</dbReference>
<dbReference type="Antibodypedia" id="63854">
    <property type="antibodies" value="7 antibodies from 5 providers"/>
</dbReference>
<dbReference type="DNASU" id="79008"/>
<dbReference type="Ensembl" id="ENST00000251303.11">
    <molecule id="Q9BQ83-1"/>
    <property type="protein sequence ID" value="ENSP00000251303.7"/>
    <property type="gene ID" value="ENSG00000132207.19"/>
</dbReference>
<dbReference type="Ensembl" id="ENST00000330181.10">
    <molecule id="Q9BQ83-1"/>
    <property type="protein sequence ID" value="ENSP00000328940.5"/>
    <property type="gene ID" value="ENSG00000181625.18"/>
</dbReference>
<dbReference type="Ensembl" id="ENST00000345535.9">
    <molecule id="Q9BQ83-2"/>
    <property type="protein sequence ID" value="ENSP00000333945.4"/>
    <property type="gene ID" value="ENSG00000132207.19"/>
</dbReference>
<dbReference type="Ensembl" id="ENST00000351581.4">
    <molecule id="Q9BQ83-2"/>
    <property type="protein sequence ID" value="ENSP00000335316.4"/>
    <property type="gene ID" value="ENSG00000181625.18"/>
</dbReference>
<dbReference type="GeneID" id="548593"/>
<dbReference type="GeneID" id="79008"/>
<dbReference type="KEGG" id="hsa:548593"/>
<dbReference type="KEGG" id="hsa:79008"/>
<dbReference type="MANE-Select" id="ENST00000251303.11">
    <property type="protein sequence ID" value="ENSP00000251303.7"/>
    <property type="RefSeq nucleotide sequence ID" value="NM_001014999.3"/>
    <property type="RefSeq protein sequence ID" value="NP_001014999.1"/>
</dbReference>
<dbReference type="MANE-Select" id="ENST00000330181.10">
    <property type="protein sequence ID" value="ENSP00000328940.5"/>
    <property type="RefSeq nucleotide sequence ID" value="NM_024044.5"/>
    <property type="RefSeq protein sequence ID" value="NP_076949.1"/>
</dbReference>
<dbReference type="UCSC" id="uc002dsx.4">
    <molecule id="Q9BQ83-1"/>
    <property type="organism name" value="human"/>
</dbReference>
<dbReference type="AGR" id="HGNC:20922"/>
<dbReference type="AGR" id="HGNC:28748"/>
<dbReference type="CTD" id="548593"/>
<dbReference type="CTD" id="79008"/>
<dbReference type="DisGeNET" id="548593"/>
<dbReference type="DisGeNET" id="79008"/>
<dbReference type="GeneCards" id="SLX1A"/>
<dbReference type="GeneCards" id="SLX1B"/>
<dbReference type="HGNC" id="HGNC:20922">
    <property type="gene designation" value="SLX1A"/>
</dbReference>
<dbReference type="HGNC" id="HGNC:28748">
    <property type="gene designation" value="SLX1B"/>
</dbReference>
<dbReference type="HPA" id="ENSG00000132207">
    <property type="expression patterns" value="Low tissue specificity"/>
</dbReference>
<dbReference type="HPA" id="ENSG00000181625">
    <property type="expression patterns" value="Low tissue specificity"/>
</dbReference>
<dbReference type="MIM" id="615822">
    <property type="type" value="gene"/>
</dbReference>
<dbReference type="MIM" id="615823">
    <property type="type" value="gene"/>
</dbReference>
<dbReference type="neXtProt" id="NX_Q9BQ83"/>
<dbReference type="OpenTargets" id="ENSG00000132207"/>
<dbReference type="PharmGKB" id="PA142671738"/>
<dbReference type="VEuPathDB" id="HostDB:ENSG00000132207"/>
<dbReference type="VEuPathDB" id="HostDB:ENSG00000181625"/>
<dbReference type="eggNOG" id="KOG3005">
    <property type="taxonomic scope" value="Eukaryota"/>
</dbReference>
<dbReference type="GeneTree" id="ENSGT00390000013368"/>
<dbReference type="HOGENOM" id="CLU_030739_0_0_1"/>
<dbReference type="InParanoid" id="Q9BQ83"/>
<dbReference type="OMA" id="HNRGCDF"/>
<dbReference type="OrthoDB" id="24645at2759"/>
<dbReference type="PAN-GO" id="Q9BQ83">
    <property type="GO annotations" value="4 GO annotations based on evolutionary models"/>
</dbReference>
<dbReference type="PhylomeDB" id="Q9BQ83"/>
<dbReference type="TreeFam" id="TF352344"/>
<dbReference type="PathwayCommons" id="Q9BQ83"/>
<dbReference type="Reactome" id="R-HSA-5693568">
    <property type="pathway name" value="Resolution of D-loop Structures through Holliday Junction Intermediates"/>
</dbReference>
<dbReference type="Reactome" id="R-HSA-6783310">
    <property type="pathway name" value="Fanconi Anemia Pathway"/>
</dbReference>
<dbReference type="SignaLink" id="Q9BQ83"/>
<dbReference type="BioGRID-ORCS" id="548593">
    <property type="hits" value="31 hits in 645 CRISPR screens"/>
</dbReference>
<dbReference type="BioGRID-ORCS" id="79008">
    <property type="hits" value="15 hits in 247 CRISPR screens"/>
</dbReference>
<dbReference type="ChiTaRS" id="SLX1A">
    <property type="organism name" value="human"/>
</dbReference>
<dbReference type="Pharos" id="Q9BQ83">
    <property type="development level" value="Tbio"/>
</dbReference>
<dbReference type="PRO" id="PR:Q9BQ83"/>
<dbReference type="Proteomes" id="UP000005640">
    <property type="component" value="Chromosome 16"/>
</dbReference>
<dbReference type="RNAct" id="Q9BQ83">
    <property type="molecule type" value="protein"/>
</dbReference>
<dbReference type="Bgee" id="ENSG00000132207">
    <property type="expression patterns" value="Expressed in granulocyte and 97 other cell types or tissues"/>
</dbReference>
<dbReference type="ExpressionAtlas" id="Q9BQ83">
    <property type="expression patterns" value="baseline and differential"/>
</dbReference>
<dbReference type="GO" id="GO:0005654">
    <property type="term" value="C:nucleoplasm"/>
    <property type="evidence" value="ECO:0000314"/>
    <property type="project" value="HPA"/>
</dbReference>
<dbReference type="GO" id="GO:0033557">
    <property type="term" value="C:Slx1-Slx4 complex"/>
    <property type="evidence" value="ECO:0000314"/>
    <property type="project" value="UniProtKB"/>
</dbReference>
<dbReference type="GO" id="GO:0017108">
    <property type="term" value="F:5'-flap endonuclease activity"/>
    <property type="evidence" value="ECO:0000314"/>
    <property type="project" value="UniProtKB"/>
</dbReference>
<dbReference type="GO" id="GO:0008821">
    <property type="term" value="F:crossover junction DNA endonuclease activity"/>
    <property type="evidence" value="ECO:0000314"/>
    <property type="project" value="UniProtKB"/>
</dbReference>
<dbReference type="GO" id="GO:0008270">
    <property type="term" value="F:zinc ion binding"/>
    <property type="evidence" value="ECO:0007669"/>
    <property type="project" value="UniProtKB-KW"/>
</dbReference>
<dbReference type="GO" id="GO:0010792">
    <property type="term" value="P:DNA double-strand break processing involved in repair via single-strand annealing"/>
    <property type="evidence" value="ECO:0000315"/>
    <property type="project" value="UniProtKB"/>
</dbReference>
<dbReference type="GO" id="GO:0006281">
    <property type="term" value="P:DNA repair"/>
    <property type="evidence" value="ECO:0000315"/>
    <property type="project" value="UniProtKB"/>
</dbReference>
<dbReference type="GO" id="GO:0000724">
    <property type="term" value="P:double-strand break repair via homologous recombination"/>
    <property type="evidence" value="ECO:0000315"/>
    <property type="project" value="UniProtKB"/>
</dbReference>
<dbReference type="GO" id="GO:1904357">
    <property type="term" value="P:negative regulation of telomere maintenance via telomere lengthening"/>
    <property type="evidence" value="ECO:0000315"/>
    <property type="project" value="BHF-UCL"/>
</dbReference>
<dbReference type="GO" id="GO:1904431">
    <property type="term" value="P:positive regulation of t-circle formation"/>
    <property type="evidence" value="ECO:0000250"/>
    <property type="project" value="BHF-UCL"/>
</dbReference>
<dbReference type="GO" id="GO:0090656">
    <property type="term" value="P:t-circle formation"/>
    <property type="evidence" value="ECO:0000315"/>
    <property type="project" value="BHF-UCL"/>
</dbReference>
<dbReference type="GO" id="GO:0010833">
    <property type="term" value="P:telomere maintenance via telomere lengthening"/>
    <property type="evidence" value="ECO:0000315"/>
    <property type="project" value="BHF-UCL"/>
</dbReference>
<dbReference type="GO" id="GO:0061820">
    <property type="term" value="P:telomeric D-loop disassembly"/>
    <property type="evidence" value="ECO:0000315"/>
    <property type="project" value="BHF-UCL"/>
</dbReference>
<dbReference type="CDD" id="cd10455">
    <property type="entry name" value="GIY-YIG_SLX1"/>
    <property type="match status" value="1"/>
</dbReference>
<dbReference type="FunFam" id="3.30.40.10:FF:000392">
    <property type="entry name" value="Structure-specific endonuclease subunit SLX1"/>
    <property type="match status" value="1"/>
</dbReference>
<dbReference type="FunFam" id="3.40.1440.10:FF:000003">
    <property type="entry name" value="Structure-specific endonuclease subunit SLX1"/>
    <property type="match status" value="1"/>
</dbReference>
<dbReference type="Gene3D" id="3.40.1440.10">
    <property type="entry name" value="GIY-YIG endonuclease"/>
    <property type="match status" value="1"/>
</dbReference>
<dbReference type="Gene3D" id="3.30.40.10">
    <property type="entry name" value="Zinc/RING finger domain, C3HC4 (zinc finger)"/>
    <property type="match status" value="1"/>
</dbReference>
<dbReference type="HAMAP" id="MF_03100">
    <property type="entry name" value="Endonuc_su_Slx1"/>
    <property type="match status" value="1"/>
</dbReference>
<dbReference type="InterPro" id="IPR000305">
    <property type="entry name" value="GIY-YIG_endonuc"/>
</dbReference>
<dbReference type="InterPro" id="IPR035901">
    <property type="entry name" value="GIY-YIG_endonuc_sf"/>
</dbReference>
<dbReference type="InterPro" id="IPR027520">
    <property type="entry name" value="Slx1"/>
</dbReference>
<dbReference type="InterPro" id="IPR048749">
    <property type="entry name" value="SLX1_C"/>
</dbReference>
<dbReference type="InterPro" id="IPR050381">
    <property type="entry name" value="SLX1_endonuclease"/>
</dbReference>
<dbReference type="InterPro" id="IPR013083">
    <property type="entry name" value="Znf_RING/FYVE/PHD"/>
</dbReference>
<dbReference type="PANTHER" id="PTHR20208">
    <property type="entry name" value="STRUCTURE-SPECIFIC ENDONUCLEASE SUBUNIT SLX1"/>
    <property type="match status" value="1"/>
</dbReference>
<dbReference type="PANTHER" id="PTHR20208:SF10">
    <property type="entry name" value="STRUCTURE-SPECIFIC ENDONUCLEASE SUBUNIT SLX1"/>
    <property type="match status" value="1"/>
</dbReference>
<dbReference type="Pfam" id="PF01541">
    <property type="entry name" value="GIY-YIG"/>
    <property type="match status" value="1"/>
</dbReference>
<dbReference type="Pfam" id="PF21202">
    <property type="entry name" value="SLX1_C"/>
    <property type="match status" value="1"/>
</dbReference>
<dbReference type="SUPFAM" id="SSF82771">
    <property type="entry name" value="GIY-YIG endonuclease"/>
    <property type="match status" value="1"/>
</dbReference>
<dbReference type="PROSITE" id="PS50164">
    <property type="entry name" value="GIY_YIG"/>
    <property type="match status" value="1"/>
</dbReference>